<organism>
    <name type="scientific">Cauliflower mosaic virus (strain CM-1841)</name>
    <name type="common">CaMV</name>
    <dbReference type="NCBI Taxonomy" id="10644"/>
    <lineage>
        <taxon>Viruses</taxon>
        <taxon>Riboviria</taxon>
        <taxon>Pararnavirae</taxon>
        <taxon>Artverviricota</taxon>
        <taxon>Revtraviricetes</taxon>
        <taxon>Ortervirales</taxon>
        <taxon>Caulimoviridae</taxon>
        <taxon>Caulimovirus</taxon>
        <taxon>Caulimovirus tessellobrassicae</taxon>
    </lineage>
</organism>
<accession>P03549</accession>
<dbReference type="EMBL" id="V00140">
    <property type="protein sequence ID" value="CAA23453.1"/>
    <property type="molecule type" value="Genomic_DNA"/>
</dbReference>
<dbReference type="SMR" id="P03549"/>
<dbReference type="Proteomes" id="UP000008438">
    <property type="component" value="Genome"/>
</dbReference>
<dbReference type="InterPro" id="IPR004917">
    <property type="entry name" value="Caulimo_AT"/>
</dbReference>
<dbReference type="Pfam" id="PF03233">
    <property type="entry name" value="Cauli_AT"/>
    <property type="match status" value="1"/>
</dbReference>
<organismHost>
    <name type="scientific">Arabidopsis thaliana</name>
    <name type="common">Mouse-ear cress</name>
    <dbReference type="NCBI Taxonomy" id="3702"/>
</organismHost>
<organismHost>
    <name type="scientific">Brassica</name>
    <dbReference type="NCBI Taxonomy" id="3705"/>
</organismHost>
<organismHost>
    <name type="scientific">Raphanus</name>
    <dbReference type="NCBI Taxonomy" id="3725"/>
</organismHost>
<protein>
    <recommendedName>
        <fullName>Aphid transmission protein</fullName>
    </recommendedName>
    <alternativeName>
        <fullName>Atf</fullName>
    </alternativeName>
    <alternativeName>
        <fullName>Protein 2</fullName>
    </alternativeName>
</protein>
<feature type="chain" id="PRO_0000222067" description="Aphid transmission protein">
    <location>
        <begin position="1"/>
        <end position="159"/>
    </location>
</feature>
<proteinExistence type="inferred from homology"/>
<reference key="1">
    <citation type="journal article" date="1981" name="Nucleic Acids Res.">
        <title>The complete nucleotide sequence of an infectious clone of cauliflower mosaic virus by M13mp7 shotgun sequencing.</title>
        <authorList>
            <person name="Gardner R.C."/>
            <person name="Howarth A.J."/>
            <person name="Hahn P."/>
            <person name="Brown-Luedi M."/>
            <person name="Shepherd R.J."/>
            <person name="Messing J."/>
        </authorList>
    </citation>
    <scope>NUCLEOTIDE SEQUENCE [GENOMIC DNA]</scope>
</reference>
<sequence>MSITGQPHVYKKDTIIRLKPLSLNSNNRSYVFSSSKGNIQNIINHLNNLNEIVGRSLLGIWKINSYFGLSKDPSESKSKNPSVFNTAKNIFKSRGVDYSSQLKEVKSLLEAQNTRIKNLENAIQSLDNKIEPEPLTKEEVKELKESINSIKEGLKNIIG</sequence>
<name>VAT_CAMVC</name>
<comment type="function">
    <text>This protein is involved in virus transmission.</text>
</comment>
<comment type="similarity">
    <text evidence="1">Belongs to the caulimoviridae ORF II family.</text>
</comment>
<gene>
    <name type="ORF">ORF II</name>
</gene>
<evidence type="ECO:0000305" key="1"/>